<dbReference type="EMBL" id="CP000468">
    <property type="protein sequence ID" value="ABJ02792.1"/>
    <property type="molecule type" value="Genomic_DNA"/>
</dbReference>
<dbReference type="RefSeq" id="WP_000529945.1">
    <property type="nucleotide sequence ID" value="NZ_CADILS010000044.1"/>
</dbReference>
<dbReference type="SMR" id="A1AGK2"/>
<dbReference type="GeneID" id="97603663"/>
<dbReference type="KEGG" id="ecv:APECO1_3136"/>
<dbReference type="HOGENOM" id="CLU_058591_0_2_6"/>
<dbReference type="Proteomes" id="UP000008216">
    <property type="component" value="Chromosome"/>
</dbReference>
<dbReference type="GO" id="GO:0022627">
    <property type="term" value="C:cytosolic small ribosomal subunit"/>
    <property type="evidence" value="ECO:0007669"/>
    <property type="project" value="TreeGrafter"/>
</dbReference>
<dbReference type="GO" id="GO:0003729">
    <property type="term" value="F:mRNA binding"/>
    <property type="evidence" value="ECO:0007669"/>
    <property type="project" value="UniProtKB-UniRule"/>
</dbReference>
<dbReference type="GO" id="GO:0019843">
    <property type="term" value="F:rRNA binding"/>
    <property type="evidence" value="ECO:0007669"/>
    <property type="project" value="UniProtKB-UniRule"/>
</dbReference>
<dbReference type="GO" id="GO:0003735">
    <property type="term" value="F:structural constituent of ribosome"/>
    <property type="evidence" value="ECO:0007669"/>
    <property type="project" value="InterPro"/>
</dbReference>
<dbReference type="GO" id="GO:0006412">
    <property type="term" value="P:translation"/>
    <property type="evidence" value="ECO:0007669"/>
    <property type="project" value="UniProtKB-UniRule"/>
</dbReference>
<dbReference type="CDD" id="cd02412">
    <property type="entry name" value="KH-II_30S_S3"/>
    <property type="match status" value="1"/>
</dbReference>
<dbReference type="FunFam" id="3.30.1140.32:FF:000001">
    <property type="entry name" value="30S ribosomal protein S3"/>
    <property type="match status" value="1"/>
</dbReference>
<dbReference type="FunFam" id="3.30.300.20:FF:000001">
    <property type="entry name" value="30S ribosomal protein S3"/>
    <property type="match status" value="1"/>
</dbReference>
<dbReference type="Gene3D" id="3.30.300.20">
    <property type="match status" value="1"/>
</dbReference>
<dbReference type="Gene3D" id="3.30.1140.32">
    <property type="entry name" value="Ribosomal protein S3, C-terminal domain"/>
    <property type="match status" value="1"/>
</dbReference>
<dbReference type="HAMAP" id="MF_01309_B">
    <property type="entry name" value="Ribosomal_uS3_B"/>
    <property type="match status" value="1"/>
</dbReference>
<dbReference type="InterPro" id="IPR004087">
    <property type="entry name" value="KH_dom"/>
</dbReference>
<dbReference type="InterPro" id="IPR015946">
    <property type="entry name" value="KH_dom-like_a/b"/>
</dbReference>
<dbReference type="InterPro" id="IPR004044">
    <property type="entry name" value="KH_dom_type_2"/>
</dbReference>
<dbReference type="InterPro" id="IPR009019">
    <property type="entry name" value="KH_sf_prok-type"/>
</dbReference>
<dbReference type="InterPro" id="IPR036419">
    <property type="entry name" value="Ribosomal_S3_C_sf"/>
</dbReference>
<dbReference type="InterPro" id="IPR005704">
    <property type="entry name" value="Ribosomal_uS3_bac-typ"/>
</dbReference>
<dbReference type="InterPro" id="IPR001351">
    <property type="entry name" value="Ribosomal_uS3_C"/>
</dbReference>
<dbReference type="InterPro" id="IPR018280">
    <property type="entry name" value="Ribosomal_uS3_CS"/>
</dbReference>
<dbReference type="NCBIfam" id="TIGR01009">
    <property type="entry name" value="rpsC_bact"/>
    <property type="match status" value="1"/>
</dbReference>
<dbReference type="PANTHER" id="PTHR11760">
    <property type="entry name" value="30S/40S RIBOSOMAL PROTEIN S3"/>
    <property type="match status" value="1"/>
</dbReference>
<dbReference type="PANTHER" id="PTHR11760:SF19">
    <property type="entry name" value="SMALL RIBOSOMAL SUBUNIT PROTEIN US3C"/>
    <property type="match status" value="1"/>
</dbReference>
<dbReference type="Pfam" id="PF07650">
    <property type="entry name" value="KH_2"/>
    <property type="match status" value="1"/>
</dbReference>
<dbReference type="Pfam" id="PF00189">
    <property type="entry name" value="Ribosomal_S3_C"/>
    <property type="match status" value="1"/>
</dbReference>
<dbReference type="SMART" id="SM00322">
    <property type="entry name" value="KH"/>
    <property type="match status" value="1"/>
</dbReference>
<dbReference type="SUPFAM" id="SSF54814">
    <property type="entry name" value="Prokaryotic type KH domain (KH-domain type II)"/>
    <property type="match status" value="1"/>
</dbReference>
<dbReference type="SUPFAM" id="SSF54821">
    <property type="entry name" value="Ribosomal protein S3 C-terminal domain"/>
    <property type="match status" value="1"/>
</dbReference>
<dbReference type="PROSITE" id="PS50823">
    <property type="entry name" value="KH_TYPE_2"/>
    <property type="match status" value="1"/>
</dbReference>
<dbReference type="PROSITE" id="PS00548">
    <property type="entry name" value="RIBOSOMAL_S3"/>
    <property type="match status" value="1"/>
</dbReference>
<keyword id="KW-1185">Reference proteome</keyword>
<keyword id="KW-0687">Ribonucleoprotein</keyword>
<keyword id="KW-0689">Ribosomal protein</keyword>
<keyword id="KW-0694">RNA-binding</keyword>
<keyword id="KW-0699">rRNA-binding</keyword>
<feature type="chain" id="PRO_0000293787" description="Small ribosomal subunit protein uS3">
    <location>
        <begin position="1"/>
        <end position="233"/>
    </location>
</feature>
<feature type="domain" description="KH type-2" evidence="1">
    <location>
        <begin position="39"/>
        <end position="107"/>
    </location>
</feature>
<comment type="function">
    <text evidence="1">Binds the lower part of the 30S subunit head. Binds mRNA in the 70S ribosome, positioning it for translation.</text>
</comment>
<comment type="subunit">
    <text evidence="1">Part of the 30S ribosomal subunit. Forms a tight complex with proteins S10 and S14.</text>
</comment>
<comment type="similarity">
    <text evidence="1">Belongs to the universal ribosomal protein uS3 family.</text>
</comment>
<reference key="1">
    <citation type="journal article" date="2007" name="J. Bacteriol.">
        <title>The genome sequence of avian pathogenic Escherichia coli strain O1:K1:H7 shares strong similarities with human extraintestinal pathogenic E. coli genomes.</title>
        <authorList>
            <person name="Johnson T.J."/>
            <person name="Kariyawasam S."/>
            <person name="Wannemuehler Y."/>
            <person name="Mangiamele P."/>
            <person name="Johnson S.J."/>
            <person name="Doetkott C."/>
            <person name="Skyberg J.A."/>
            <person name="Lynne A.M."/>
            <person name="Johnson J.R."/>
            <person name="Nolan L.K."/>
        </authorList>
    </citation>
    <scope>NUCLEOTIDE SEQUENCE [LARGE SCALE GENOMIC DNA]</scope>
</reference>
<proteinExistence type="inferred from homology"/>
<name>RS3_ECOK1</name>
<sequence length="233" mass="25983">MGQKVHPNGIRLGIVKPWNSTWFANTKEFADNLDSDFKVRQYLTKELAKASVSRIVIERPAKSIRVTIHTARPGIVIGKKGEDVEKLRKVVADIAGVPAQINIAEVRKPELDAKLVADSITSQLERRVMFRRAMKRAVQNAMRLGAKGIKVEVSGRLGGAEIARTEWYREGRVPLHTLRADIDYNTSEAHTTYGVIGVKVWIFKGEILGGMAAVEQPEKPAAQPKKQQRKGRK</sequence>
<accession>A1AGK2</accession>
<protein>
    <recommendedName>
        <fullName evidence="1">Small ribosomal subunit protein uS3</fullName>
    </recommendedName>
    <alternativeName>
        <fullName evidence="2">30S ribosomal protein S3</fullName>
    </alternativeName>
</protein>
<organism>
    <name type="scientific">Escherichia coli O1:K1 / APEC</name>
    <dbReference type="NCBI Taxonomy" id="405955"/>
    <lineage>
        <taxon>Bacteria</taxon>
        <taxon>Pseudomonadati</taxon>
        <taxon>Pseudomonadota</taxon>
        <taxon>Gammaproteobacteria</taxon>
        <taxon>Enterobacterales</taxon>
        <taxon>Enterobacteriaceae</taxon>
        <taxon>Escherichia</taxon>
    </lineage>
</organism>
<evidence type="ECO:0000255" key="1">
    <source>
        <dbReference type="HAMAP-Rule" id="MF_01309"/>
    </source>
</evidence>
<evidence type="ECO:0000305" key="2"/>
<gene>
    <name evidence="1" type="primary">rpsC</name>
    <name type="ordered locus">Ecok1_32980</name>
    <name type="ORF">APECO1_3136</name>
</gene>